<proteinExistence type="evidence at protein level"/>
<protein>
    <recommendedName>
        <fullName>Gustatory receptor for sugar taste 43a</fullName>
    </recommendedName>
</protein>
<evidence type="ECO:0000250" key="1"/>
<evidence type="ECO:0000269" key="2">
    <source>
    </source>
</evidence>
<evidence type="ECO:0000269" key="3">
    <source>
    </source>
</evidence>
<evidence type="ECO:0000269" key="4">
    <source>
    </source>
</evidence>
<evidence type="ECO:0000269" key="5">
    <source>
    </source>
</evidence>
<evidence type="ECO:0000269" key="6">
    <source>
    </source>
</evidence>
<evidence type="ECO:0000269" key="7">
    <source>
    </source>
</evidence>
<evidence type="ECO:0000305" key="8"/>
<evidence type="ECO:0007744" key="9">
    <source>
        <dbReference type="PDB" id="8JM9"/>
    </source>
</evidence>
<evidence type="ECO:0007744" key="10">
    <source>
        <dbReference type="PDB" id="8JMA"/>
    </source>
</evidence>
<evidence type="ECO:0007744" key="11">
    <source>
        <dbReference type="PDB" id="8X82"/>
    </source>
</evidence>
<evidence type="ECO:0007744" key="12">
    <source>
        <dbReference type="PDB" id="8X83"/>
    </source>
</evidence>
<evidence type="ECO:0007744" key="13">
    <source>
        <dbReference type="PDB" id="8X84"/>
    </source>
</evidence>
<evidence type="ECO:0007829" key="14">
    <source>
        <dbReference type="PDB" id="8JMA"/>
    </source>
</evidence>
<organism>
    <name type="scientific">Drosophila melanogaster</name>
    <name type="common">Fruit fly</name>
    <dbReference type="NCBI Taxonomy" id="7227"/>
    <lineage>
        <taxon>Eukaryota</taxon>
        <taxon>Metazoa</taxon>
        <taxon>Ecdysozoa</taxon>
        <taxon>Arthropoda</taxon>
        <taxon>Hexapoda</taxon>
        <taxon>Insecta</taxon>
        <taxon>Pterygota</taxon>
        <taxon>Neoptera</taxon>
        <taxon>Endopterygota</taxon>
        <taxon>Diptera</taxon>
        <taxon>Brachycera</taxon>
        <taxon>Muscomorpha</taxon>
        <taxon>Ephydroidea</taxon>
        <taxon>Drosophilidae</taxon>
        <taxon>Drosophila</taxon>
        <taxon>Sophophora</taxon>
    </lineage>
</organism>
<sequence length="427" mass="47573">MEISQPSIGIFYISKVLALAPYATVRNSKGRVEIGRSWLFTVYSATLTVVMVFLTYRGLLFDANSEIPVRMKSATSKVVTALDVSVVVMAIVSGVYCGLFSLNDTLELNDRLNKIDNTLNAYNNFRRDRWRALGMAAVSLLAISILVGLDVGTWMRIAQDMNIAQSDTELNVHWYIPFYSLYFILTGLQVNIANTAYGLGRRFGRLNRMLSSSFLAENNATSAIKPQKVSTVKNVSVNRPAMPSALHASLTKLNGETLPSEAAAKNKGLLLKSLADSHESLGKCVHLLSNSFGIAVLFILVSCLLHLVATAYFLFLELLSKRDNGYLWVQMLWICFHFLRLLMVVEPCHLAARESRKTIQIVCEIERKVHEPILAEAVKKFWQQLLVVDADFSACGLCRVNRTILTSFASAIATYLVILIQFQRTNG</sequence>
<comment type="function">
    <text evidence="3 5 6 7">Gustatory receptor which mediates acceptance or avoidance behavior, depending on its substrates. Gr43a is the main sugar receptor in larvae. Functions as a narrowly tuned fructose receptor in taste neurons but also as a fructose receptor in the brain. Necessary and sufficient to sense hemolymph fructose and promote feeding in hungry flies but suppress feeding in satiated flies.</text>
</comment>
<comment type="subunit">
    <text evidence="7">Homotetramer.</text>
</comment>
<comment type="subcellular location">
    <subcellularLocation>
        <location evidence="1">Cell membrane</location>
        <topology evidence="1">Multi-pass membrane protein</topology>
    </subcellularLocation>
</comment>
<comment type="tissue specificity">
    <text evidence="2 4 5 6">Expressed in the adult labellar chemosensory neurons and in the adult head, abdomen, leg and wing. In larvae, is expressed in taste organs, as well as the brain and the gastrointestinal system.</text>
</comment>
<comment type="similarity">
    <text evidence="8">Belongs to the insect chemoreceptor superfamily. Gustatory receptor (GR) family. Gr21a subfamily.</text>
</comment>
<feature type="chain" id="PRO_0000216514" description="Gustatory receptor for sugar taste 43a">
    <location>
        <begin position="1"/>
        <end position="427"/>
    </location>
</feature>
<feature type="topological domain" description="Cytoplasmic" evidence="7 9">
    <location>
        <begin position="1"/>
        <end position="37"/>
    </location>
</feature>
<feature type="transmembrane region" description="Helical; Name=S1" evidence="7 9">
    <location>
        <begin position="38"/>
        <end position="63"/>
    </location>
</feature>
<feature type="topological domain" description="Extracellular" evidence="7 9">
    <location>
        <begin position="64"/>
        <end position="75"/>
    </location>
</feature>
<feature type="transmembrane region" description="Helical; Name=S2" evidence="7 9">
    <location>
        <begin position="76"/>
        <end position="96"/>
    </location>
</feature>
<feature type="topological domain" description="Cytoplasmic" evidence="7 9">
    <location>
        <begin position="97"/>
        <end position="135"/>
    </location>
</feature>
<feature type="transmembrane region" description="Helical; Name=S3" evidence="7 9">
    <location>
        <begin position="136"/>
        <end position="158"/>
    </location>
</feature>
<feature type="topological domain" description="Extracellular" evidence="7 9">
    <location>
        <begin position="159"/>
        <end position="168"/>
    </location>
</feature>
<feature type="transmembrane region" description="Helical; Name=S4" evidence="7 9">
    <location>
        <begin position="169"/>
        <end position="193"/>
    </location>
</feature>
<feature type="topological domain" description="Cytoplasmic" evidence="7 9">
    <location>
        <begin position="194"/>
        <end position="293"/>
    </location>
</feature>
<feature type="transmembrane region" description="Helical; Name=S5" evidence="7 9">
    <location>
        <begin position="294"/>
        <end position="316"/>
    </location>
</feature>
<feature type="topological domain" description="Extracellular" evidence="7 9">
    <location>
        <begin position="317"/>
        <end position="324"/>
    </location>
</feature>
<feature type="transmembrane region" description="Helical; Name=S6" evidence="7 9">
    <location>
        <begin position="325"/>
        <end position="346"/>
    </location>
</feature>
<feature type="topological domain" description="Cytoplasmic" evidence="7 9">
    <location>
        <begin position="347"/>
        <end position="402"/>
    </location>
</feature>
<feature type="transmembrane region" description="Helical; Name=S7b" evidence="7 9">
    <location>
        <begin position="403"/>
        <end position="423"/>
    </location>
</feature>
<feature type="topological domain" description="Extracellular" evidence="7 9">
    <location>
        <begin position="424"/>
        <end position="427"/>
    </location>
</feature>
<feature type="binding site" evidence="7 10 12">
    <location>
        <position position="70"/>
    </location>
    <ligand>
        <name>beta-D-fructose</name>
        <dbReference type="ChEBI" id="CHEBI:28645"/>
    </ligand>
</feature>
<feature type="binding site" evidence="7 10 12">
    <location>
        <position position="83"/>
    </location>
    <ligand>
        <name>beta-D-fructose</name>
        <dbReference type="ChEBI" id="CHEBI:28645"/>
    </ligand>
</feature>
<feature type="binding site" evidence="7 10 12">
    <location>
        <position position="182"/>
    </location>
    <ligand>
        <name>beta-D-fructose</name>
        <dbReference type="ChEBI" id="CHEBI:28645"/>
    </ligand>
</feature>
<feature type="binding site" evidence="7 10 12">
    <location>
        <position position="310"/>
    </location>
    <ligand>
        <name>beta-D-fructose</name>
        <dbReference type="ChEBI" id="CHEBI:28645"/>
    </ligand>
</feature>
<feature type="binding site" evidence="7 10 12">
    <location>
        <position position="337"/>
    </location>
    <ligand>
        <name>beta-D-fructose</name>
        <dbReference type="ChEBI" id="CHEBI:28645"/>
    </ligand>
</feature>
<feature type="binding site" evidence="7 13">
    <location>
        <position position="421"/>
    </location>
    <ligand>
        <name>Ca(2+)</name>
        <dbReference type="ChEBI" id="CHEBI:29108"/>
    </ligand>
</feature>
<feature type="mutagenesis site" description="Significantly reduces fructose-induced current." evidence="7">
    <original>R</original>
    <variation>A</variation>
    <location>
        <position position="70"/>
    </location>
</feature>
<feature type="mutagenesis site" description="Abolishes fructose-induced current." evidence="7">
    <original>D</original>
    <variation>A</variation>
    <location>
        <position position="83"/>
    </location>
</feature>
<feature type="mutagenesis site" description="Abolishes fructose-induced current." evidence="7">
    <original>D</original>
    <variation>A</variation>
    <location>
        <position position="150"/>
    </location>
</feature>
<feature type="mutagenesis site" description="Abolishes fructose-induced current." evidence="7">
    <original>Y</original>
    <variation>A</variation>
    <location>
        <position position="182"/>
    </location>
</feature>
<feature type="mutagenesis site" description="No effect on fructose-induced current." evidence="7">
    <original>S</original>
    <variation>A</variation>
    <location>
        <position position="212"/>
    </location>
</feature>
<feature type="mutagenesis site" description="No effect on fructose-induced current." evidence="7">
    <original>N</original>
    <variation>A</variation>
    <location>
        <position position="266"/>
    </location>
</feature>
<feature type="mutagenesis site" description="No effect on fructose-induced current." evidence="7">
    <original>L</original>
    <variation>A</variation>
    <location>
        <position position="269"/>
    </location>
</feature>
<feature type="mutagenesis site" description="Increases conduit ion current amplitude significantly." evidence="7">
    <original>H</original>
    <variation>W</variation>
    <location>
        <position position="286"/>
    </location>
</feature>
<feature type="mutagenesis site" description="Significantly reduces fructose-induced current." evidence="7">
    <original>H</original>
    <variation>A</variation>
    <location>
        <position position="306"/>
    </location>
</feature>
<feature type="mutagenesis site" description="Abolishes fructose-induced current." evidence="7">
    <original>T</original>
    <variation>A</variation>
    <location>
        <position position="310"/>
    </location>
</feature>
<feature type="mutagenesis site" description="Abolishes fructose-induced current." evidence="7">
    <original>W</original>
    <variation>A</variation>
    <location>
        <position position="333"/>
    </location>
</feature>
<feature type="mutagenesis site" description="Abolishes fructose-induced current." evidence="7">
    <original>H</original>
    <variation>A</variation>
    <location>
        <position position="337"/>
    </location>
</feature>
<feature type="mutagenesis site" description="Reduces conduit ion current amplitude significantly." evidence="7">
    <original>R</original>
    <variation>W</variation>
    <location>
        <position position="353"/>
    </location>
</feature>
<feature type="mutagenesis site" description="Reduces conduit ion current amplitude significantly." evidence="7">
    <original>K</original>
    <variation>W</variation>
    <location>
        <position position="357"/>
    </location>
</feature>
<feature type="mutagenesis site" description="Reduces conduit ion current amplitude significantly." evidence="7">
    <original>Q</original>
    <variation>W</variation>
    <location>
        <position position="360"/>
    </location>
</feature>
<feature type="mutagenesis site" description="Reduces conduit ion current amplitude significantly." evidence="7">
    <original>D</original>
    <variation>W</variation>
    <location>
        <position position="389"/>
    </location>
</feature>
<feature type="mutagenesis site" description="Reduces conduit ion current amplitude significantly." evidence="7">
    <original>S</original>
    <variation>W</variation>
    <location>
        <position position="393"/>
    </location>
</feature>
<feature type="mutagenesis site" description="Results in constitutive activation of the channel pore that is further activated when fructose binds." evidence="7">
    <original>I</original>
    <variation>A</variation>
    <location>
        <position position="418"/>
    </location>
</feature>
<feature type="mutagenesis site" description="Complete loss of function." evidence="7">
    <original>Q</original>
    <variation>A</variation>
    <location>
        <position position="421"/>
    </location>
</feature>
<feature type="mutagenesis site" description="Low constitutive activity and loss of fructose sensitivity." evidence="7">
    <original>Q</original>
    <variation>N</variation>
    <location>
        <position position="421"/>
    </location>
</feature>
<feature type="mutagenesis site" description="Deactivation of central channel pore that does not reactivate upon fructose binding." evidence="7">
    <original>F</original>
    <variation>A</variation>
    <location>
        <position position="422"/>
    </location>
</feature>
<feature type="helix" evidence="14">
    <location>
        <begin position="8"/>
        <end position="16"/>
    </location>
</feature>
<feature type="strand" evidence="14">
    <location>
        <begin position="22"/>
        <end position="26"/>
    </location>
</feature>
<feature type="strand" evidence="14">
    <location>
        <begin position="32"/>
        <end position="36"/>
    </location>
</feature>
<feature type="helix" evidence="14">
    <location>
        <begin position="38"/>
        <end position="64"/>
    </location>
</feature>
<feature type="strand" evidence="14">
    <location>
        <begin position="65"/>
        <end position="67"/>
    </location>
</feature>
<feature type="strand" evidence="14">
    <location>
        <begin position="69"/>
        <end position="71"/>
    </location>
</feature>
<feature type="helix" evidence="14">
    <location>
        <begin position="74"/>
        <end position="99"/>
    </location>
</feature>
<feature type="helix" evidence="14">
    <location>
        <begin position="102"/>
        <end position="118"/>
    </location>
</feature>
<feature type="helix" evidence="14">
    <location>
        <begin position="120"/>
        <end position="122"/>
    </location>
</feature>
<feature type="helix" evidence="14">
    <location>
        <begin position="125"/>
        <end position="160"/>
    </location>
</feature>
<feature type="helix" evidence="14">
    <location>
        <begin position="169"/>
        <end position="173"/>
    </location>
</feature>
<feature type="helix" evidence="14">
    <location>
        <begin position="176"/>
        <end position="214"/>
    </location>
</feature>
<feature type="helix" evidence="14">
    <location>
        <begin position="263"/>
        <end position="320"/>
    </location>
</feature>
<feature type="helix" evidence="14">
    <location>
        <begin position="324"/>
        <end position="356"/>
    </location>
</feature>
<feature type="helix" evidence="14">
    <location>
        <begin position="358"/>
        <end position="367"/>
    </location>
</feature>
<feature type="helix" evidence="14">
    <location>
        <begin position="372"/>
        <end position="386"/>
    </location>
</feature>
<feature type="strand" evidence="14">
    <location>
        <begin position="392"/>
        <end position="394"/>
    </location>
</feature>
<feature type="strand" evidence="14">
    <location>
        <begin position="399"/>
        <end position="401"/>
    </location>
</feature>
<feature type="helix" evidence="14">
    <location>
        <begin position="403"/>
        <end position="424"/>
    </location>
</feature>
<name>GR43A_DROME</name>
<accession>Q9V4K2</accession>
<accession>Q4V4B7</accession>
<reference key="1">
    <citation type="journal article" date="2000" name="Science">
        <title>The genome sequence of Drosophila melanogaster.</title>
        <authorList>
            <person name="Adams M.D."/>
            <person name="Celniker S.E."/>
            <person name="Holt R.A."/>
            <person name="Evans C.A."/>
            <person name="Gocayne J.D."/>
            <person name="Amanatides P.G."/>
            <person name="Scherer S.E."/>
            <person name="Li P.W."/>
            <person name="Hoskins R.A."/>
            <person name="Galle R.F."/>
            <person name="George R.A."/>
            <person name="Lewis S.E."/>
            <person name="Richards S."/>
            <person name="Ashburner M."/>
            <person name="Henderson S.N."/>
            <person name="Sutton G.G."/>
            <person name="Wortman J.R."/>
            <person name="Yandell M.D."/>
            <person name="Zhang Q."/>
            <person name="Chen L.X."/>
            <person name="Brandon R.C."/>
            <person name="Rogers Y.-H.C."/>
            <person name="Blazej R.G."/>
            <person name="Champe M."/>
            <person name="Pfeiffer B.D."/>
            <person name="Wan K.H."/>
            <person name="Doyle C."/>
            <person name="Baxter E.G."/>
            <person name="Helt G."/>
            <person name="Nelson C.R."/>
            <person name="Miklos G.L.G."/>
            <person name="Abril J.F."/>
            <person name="Agbayani A."/>
            <person name="An H.-J."/>
            <person name="Andrews-Pfannkoch C."/>
            <person name="Baldwin D."/>
            <person name="Ballew R.M."/>
            <person name="Basu A."/>
            <person name="Baxendale J."/>
            <person name="Bayraktaroglu L."/>
            <person name="Beasley E.M."/>
            <person name="Beeson K.Y."/>
            <person name="Benos P.V."/>
            <person name="Berman B.P."/>
            <person name="Bhandari D."/>
            <person name="Bolshakov S."/>
            <person name="Borkova D."/>
            <person name="Botchan M.R."/>
            <person name="Bouck J."/>
            <person name="Brokstein P."/>
            <person name="Brottier P."/>
            <person name="Burtis K.C."/>
            <person name="Busam D.A."/>
            <person name="Butler H."/>
            <person name="Cadieu E."/>
            <person name="Center A."/>
            <person name="Chandra I."/>
            <person name="Cherry J.M."/>
            <person name="Cawley S."/>
            <person name="Dahlke C."/>
            <person name="Davenport L.B."/>
            <person name="Davies P."/>
            <person name="de Pablos B."/>
            <person name="Delcher A."/>
            <person name="Deng Z."/>
            <person name="Mays A.D."/>
            <person name="Dew I."/>
            <person name="Dietz S.M."/>
            <person name="Dodson K."/>
            <person name="Doup L.E."/>
            <person name="Downes M."/>
            <person name="Dugan-Rocha S."/>
            <person name="Dunkov B.C."/>
            <person name="Dunn P."/>
            <person name="Durbin K.J."/>
            <person name="Evangelista C.C."/>
            <person name="Ferraz C."/>
            <person name="Ferriera S."/>
            <person name="Fleischmann W."/>
            <person name="Fosler C."/>
            <person name="Gabrielian A.E."/>
            <person name="Garg N.S."/>
            <person name="Gelbart W.M."/>
            <person name="Glasser K."/>
            <person name="Glodek A."/>
            <person name="Gong F."/>
            <person name="Gorrell J.H."/>
            <person name="Gu Z."/>
            <person name="Guan P."/>
            <person name="Harris M."/>
            <person name="Harris N.L."/>
            <person name="Harvey D.A."/>
            <person name="Heiman T.J."/>
            <person name="Hernandez J.R."/>
            <person name="Houck J."/>
            <person name="Hostin D."/>
            <person name="Houston K.A."/>
            <person name="Howland T.J."/>
            <person name="Wei M.-H."/>
            <person name="Ibegwam C."/>
            <person name="Jalali M."/>
            <person name="Kalush F."/>
            <person name="Karpen G.H."/>
            <person name="Ke Z."/>
            <person name="Kennison J.A."/>
            <person name="Ketchum K.A."/>
            <person name="Kimmel B.E."/>
            <person name="Kodira C.D."/>
            <person name="Kraft C.L."/>
            <person name="Kravitz S."/>
            <person name="Kulp D."/>
            <person name="Lai Z."/>
            <person name="Lasko P."/>
            <person name="Lei Y."/>
            <person name="Levitsky A.A."/>
            <person name="Li J.H."/>
            <person name="Li Z."/>
            <person name="Liang Y."/>
            <person name="Lin X."/>
            <person name="Liu X."/>
            <person name="Mattei B."/>
            <person name="McIntosh T.C."/>
            <person name="McLeod M.P."/>
            <person name="McPherson D."/>
            <person name="Merkulov G."/>
            <person name="Milshina N.V."/>
            <person name="Mobarry C."/>
            <person name="Morris J."/>
            <person name="Moshrefi A."/>
            <person name="Mount S.M."/>
            <person name="Moy M."/>
            <person name="Murphy B."/>
            <person name="Murphy L."/>
            <person name="Muzny D.M."/>
            <person name="Nelson D.L."/>
            <person name="Nelson D.R."/>
            <person name="Nelson K.A."/>
            <person name="Nixon K."/>
            <person name="Nusskern D.R."/>
            <person name="Pacleb J.M."/>
            <person name="Palazzolo M."/>
            <person name="Pittman G.S."/>
            <person name="Pan S."/>
            <person name="Pollard J."/>
            <person name="Puri V."/>
            <person name="Reese M.G."/>
            <person name="Reinert K."/>
            <person name="Remington K."/>
            <person name="Saunders R.D.C."/>
            <person name="Scheeler F."/>
            <person name="Shen H."/>
            <person name="Shue B.C."/>
            <person name="Siden-Kiamos I."/>
            <person name="Simpson M."/>
            <person name="Skupski M.P."/>
            <person name="Smith T.J."/>
            <person name="Spier E."/>
            <person name="Spradling A.C."/>
            <person name="Stapleton M."/>
            <person name="Strong R."/>
            <person name="Sun E."/>
            <person name="Svirskas R."/>
            <person name="Tector C."/>
            <person name="Turner R."/>
            <person name="Venter E."/>
            <person name="Wang A.H."/>
            <person name="Wang X."/>
            <person name="Wang Z.-Y."/>
            <person name="Wassarman D.A."/>
            <person name="Weinstock G.M."/>
            <person name="Weissenbach J."/>
            <person name="Williams S.M."/>
            <person name="Woodage T."/>
            <person name="Worley K.C."/>
            <person name="Wu D."/>
            <person name="Yang S."/>
            <person name="Yao Q.A."/>
            <person name="Ye J."/>
            <person name="Yeh R.-F."/>
            <person name="Zaveri J.S."/>
            <person name="Zhan M."/>
            <person name="Zhang G."/>
            <person name="Zhao Q."/>
            <person name="Zheng L."/>
            <person name="Zheng X.H."/>
            <person name="Zhong F.N."/>
            <person name="Zhong W."/>
            <person name="Zhou X."/>
            <person name="Zhu S.C."/>
            <person name="Zhu X."/>
            <person name="Smith H.O."/>
            <person name="Gibbs R.A."/>
            <person name="Myers E.W."/>
            <person name="Rubin G.M."/>
            <person name="Venter J.C."/>
        </authorList>
    </citation>
    <scope>NUCLEOTIDE SEQUENCE [LARGE SCALE GENOMIC DNA]</scope>
    <source>
        <strain>Berkeley</strain>
    </source>
</reference>
<reference key="2">
    <citation type="journal article" date="2002" name="Genome Biol.">
        <title>Annotation of the Drosophila melanogaster euchromatic genome: a systematic review.</title>
        <authorList>
            <person name="Misra S."/>
            <person name="Crosby M.A."/>
            <person name="Mungall C.J."/>
            <person name="Matthews B.B."/>
            <person name="Campbell K.S."/>
            <person name="Hradecky P."/>
            <person name="Huang Y."/>
            <person name="Kaminker J.S."/>
            <person name="Millburn G.H."/>
            <person name="Prochnik S.E."/>
            <person name="Smith C.D."/>
            <person name="Tupy J.L."/>
            <person name="Whitfield E.J."/>
            <person name="Bayraktaroglu L."/>
            <person name="Berman B.P."/>
            <person name="Bettencourt B.R."/>
            <person name="Celniker S.E."/>
            <person name="de Grey A.D.N.J."/>
            <person name="Drysdale R.A."/>
            <person name="Harris N.L."/>
            <person name="Richter J."/>
            <person name="Russo S."/>
            <person name="Schroeder A.J."/>
            <person name="Shu S.Q."/>
            <person name="Stapleton M."/>
            <person name="Yamada C."/>
            <person name="Ashburner M."/>
            <person name="Gelbart W.M."/>
            <person name="Rubin G.M."/>
            <person name="Lewis S.E."/>
        </authorList>
    </citation>
    <scope>GENOME REANNOTATION</scope>
    <source>
        <strain>Berkeley</strain>
    </source>
</reference>
<reference key="3">
    <citation type="submission" date="2005-05" db="EMBL/GenBank/DDBJ databases">
        <authorList>
            <person name="Stapleton M."/>
            <person name="Carlson J.W."/>
            <person name="Chavez C."/>
            <person name="Frise E."/>
            <person name="George R.A."/>
            <person name="Pacleb J.M."/>
            <person name="Park S."/>
            <person name="Wan K.H."/>
            <person name="Yu C."/>
            <person name="Celniker S.E."/>
        </authorList>
    </citation>
    <scope>NUCLEOTIDE SEQUENCE [LARGE SCALE MRNA]</scope>
    <source>
        <strain>Berkeley</strain>
    </source>
</reference>
<reference key="4">
    <citation type="journal article" date="2000" name="Science">
        <title>Candidate taste receptors in Drosophila.</title>
        <authorList>
            <person name="Clyne P.J."/>
            <person name="Warr C.G."/>
            <person name="Carlson J.R."/>
        </authorList>
    </citation>
    <scope>IDENTIFICATION</scope>
    <scope>TISSUE SPECIFICITY</scope>
</reference>
<reference key="5">
    <citation type="journal article" date="2001" name="Curr. Biol.">
        <title>Spatially restricted expression of candidate taste receptors in the Drosophila gustatory system.</title>
        <authorList>
            <person name="Dunipace L."/>
            <person name="Meister S."/>
            <person name="McNealy C."/>
            <person name="Amrein H."/>
        </authorList>
    </citation>
    <scope>IDENTIFICATION</scope>
</reference>
<reference key="6">
    <citation type="journal article" date="2011" name="J. Neurosci.">
        <title>Molecular and cellular organization of the taste system in the Drosophila larva.</title>
        <authorList>
            <person name="Kwon J.Y."/>
            <person name="Dahanukar A."/>
            <person name="Weiss L.A."/>
            <person name="Carlson J.R."/>
        </authorList>
    </citation>
    <scope>TISSUE SPECIFICITY</scope>
</reference>
<reference key="7">
    <citation type="journal article" date="2011" name="Proc. Natl. Acad. Sci. U.S.A.">
        <title>Sugar-regulated cation channel formed by an insect gustatory receptor.</title>
        <authorList>
            <person name="Sato K."/>
            <person name="Tanaka K."/>
            <person name="Touhara K."/>
        </authorList>
    </citation>
    <scope>FUNCTION</scope>
</reference>
<reference key="8">
    <citation type="journal article" date="2012" name="Cell">
        <title>A fructose receptor functions as a nutrient sensor in the Drosophila brain.</title>
        <authorList>
            <person name="Miyamoto T."/>
            <person name="Slone J."/>
            <person name="Song X."/>
            <person name="Amrein H."/>
        </authorList>
    </citation>
    <scope>FUNCTION</scope>
    <scope>TISSUE SPECIFICITY</scope>
</reference>
<reference key="9">
    <citation type="journal article" date="2013" name="Curr. Biol.">
        <title>The molecular basis of sugar sensing in Drosophila larvae.</title>
        <authorList>
            <person name="Mishra D."/>
            <person name="Miyamoto T."/>
            <person name="Rezenom Y.H."/>
            <person name="Broussard A."/>
            <person name="Yavuz A."/>
            <person name="Slone J."/>
            <person name="Russell D.H."/>
            <person name="Amrein H."/>
        </authorList>
    </citation>
    <scope>FUNCTION</scope>
    <scope>TISSUE SPECIFICITY</scope>
</reference>
<reference evidence="9 10 11 12 13" key="10">
    <citation type="journal article" date="2024" name="Science">
        <title>Structural basis for sugar perception by Drosophila gustatory receptors.</title>
        <authorList>
            <person name="Ma D."/>
            <person name="Hu M."/>
            <person name="Yang X."/>
            <person name="Liu Q."/>
            <person name="Ye F."/>
            <person name="Cai W."/>
            <person name="Wang Y."/>
            <person name="Xu X."/>
            <person name="Chang S."/>
            <person name="Wang R."/>
            <person name="Yang W."/>
            <person name="Ye S."/>
            <person name="Su N."/>
            <person name="Fan M."/>
            <person name="Xu H."/>
            <person name="Guo J."/>
        </authorList>
    </citation>
    <scope>STRUCTURE BY ELECTRON MICROSCOPY (2.5 ANGSTROMS) IN APO FORM AND IN COMPLEX WITH FRUCTOSE AND CA(2+)</scope>
    <scope>FUNCTION</scope>
    <scope>SUBUNIT</scope>
    <scope>MUTAGENESIS OF ARG-70; ASP-83; ASP-150; TYR-182; SER-212; ASN-266; LEU-269; HIS-286; HIS-306; THR-310; TRP-333; HIS-337; ARG-353; LYS-357; GLN-360; ASP-389; SER-393; ILE-418; GLN-421 AND PHE-422</scope>
    <scope>TRANSMEMBRANE DOMAINS</scope>
</reference>
<dbReference type="EMBL" id="AE013599">
    <property type="protein sequence ID" value="AAF59268.3"/>
    <property type="molecule type" value="Genomic_DNA"/>
</dbReference>
<dbReference type="EMBL" id="BT023089">
    <property type="protein sequence ID" value="AAY55505.1"/>
    <property type="molecule type" value="mRNA"/>
</dbReference>
<dbReference type="RefSeq" id="NP_523650.2">
    <property type="nucleotide sequence ID" value="NM_078926.3"/>
</dbReference>
<dbReference type="PDB" id="8JM9">
    <property type="method" value="EM"/>
    <property type="resolution" value="2.60 A"/>
    <property type="chains" value="A/B/C/D=1-427"/>
</dbReference>
<dbReference type="PDB" id="8JMA">
    <property type="method" value="EM"/>
    <property type="resolution" value="2.50 A"/>
    <property type="chains" value="A/B/C/D=1-427"/>
</dbReference>
<dbReference type="PDB" id="8X82">
    <property type="method" value="EM"/>
    <property type="resolution" value="2.80 A"/>
    <property type="chains" value="A/B/C/D=1-427"/>
</dbReference>
<dbReference type="PDB" id="8X83">
    <property type="method" value="EM"/>
    <property type="resolution" value="2.80 A"/>
    <property type="chains" value="A/B/C/D=1-427"/>
</dbReference>
<dbReference type="PDB" id="8X84">
    <property type="method" value="EM"/>
    <property type="resolution" value="3.10 A"/>
    <property type="chains" value="A/B/C/D=1-427"/>
</dbReference>
<dbReference type="PDBsum" id="8JM9"/>
<dbReference type="PDBsum" id="8JMA"/>
<dbReference type="PDBsum" id="8X82"/>
<dbReference type="PDBsum" id="8X83"/>
<dbReference type="PDBsum" id="8X84"/>
<dbReference type="EMDB" id="EMD-36410"/>
<dbReference type="EMDB" id="EMD-36411"/>
<dbReference type="EMDB" id="EMD-38133"/>
<dbReference type="EMDB" id="EMD-38134"/>
<dbReference type="EMDB" id="EMD-38135"/>
<dbReference type="SMR" id="Q9V4K2"/>
<dbReference type="BioGRID" id="61536">
    <property type="interactions" value="1"/>
</dbReference>
<dbReference type="DIP" id="DIP-22568N"/>
<dbReference type="FunCoup" id="Q9V4K2">
    <property type="interactions" value="10"/>
</dbReference>
<dbReference type="IntAct" id="Q9V4K2">
    <property type="interactions" value="1"/>
</dbReference>
<dbReference type="STRING" id="7227.FBpp0311196"/>
<dbReference type="TCDB" id="1.A.69.3.2">
    <property type="family name" value="the heteromeric odorant receptor channel (horc) family"/>
</dbReference>
<dbReference type="GlyCosmos" id="Q9V4K2">
    <property type="glycosylation" value="3 sites, No reported glycans"/>
</dbReference>
<dbReference type="GlyGen" id="Q9V4K2">
    <property type="glycosylation" value="3 sites"/>
</dbReference>
<dbReference type="PaxDb" id="7227-FBpp0110117"/>
<dbReference type="DNASU" id="35655"/>
<dbReference type="EnsemblMetazoa" id="FBtr0089014">
    <property type="protein sequence ID" value="FBpp0088086"/>
    <property type="gene ID" value="FBgn0041243"/>
</dbReference>
<dbReference type="GeneID" id="35655"/>
<dbReference type="KEGG" id="dme:Dmel_CG1712"/>
<dbReference type="AGR" id="FB:FBgn0041243"/>
<dbReference type="CTD" id="35655"/>
<dbReference type="FlyBase" id="FBgn0041243">
    <property type="gene designation" value="Gr43a"/>
</dbReference>
<dbReference type="VEuPathDB" id="VectorBase:FBgn0041243"/>
<dbReference type="eggNOG" id="ENOG502S2QD">
    <property type="taxonomic scope" value="Eukaryota"/>
</dbReference>
<dbReference type="HOGENOM" id="CLU_029071_2_0_1"/>
<dbReference type="InParanoid" id="Q9V4K2"/>
<dbReference type="OrthoDB" id="6478931at2759"/>
<dbReference type="PhylomeDB" id="Q9V4K2"/>
<dbReference type="BioGRID-ORCS" id="35655">
    <property type="hits" value="0 hits in 1 CRISPR screen"/>
</dbReference>
<dbReference type="GenomeRNAi" id="35655"/>
<dbReference type="PRO" id="PR:Q9V4K2"/>
<dbReference type="Proteomes" id="UP000000803">
    <property type="component" value="Chromosome 2R"/>
</dbReference>
<dbReference type="Bgee" id="FBgn0041243">
    <property type="expression patterns" value="Expressed in sugar-sensing neuron of the adult brain in brain and 4 other cell types or tissues"/>
</dbReference>
<dbReference type="ExpressionAtlas" id="Q9V4K2">
    <property type="expression patterns" value="baseline and differential"/>
</dbReference>
<dbReference type="GO" id="GO:0030424">
    <property type="term" value="C:axon"/>
    <property type="evidence" value="ECO:0000318"/>
    <property type="project" value="GO_Central"/>
</dbReference>
<dbReference type="GO" id="GO:0030425">
    <property type="term" value="C:dendrite"/>
    <property type="evidence" value="ECO:0000318"/>
    <property type="project" value="GO_Central"/>
</dbReference>
<dbReference type="GO" id="GO:0016020">
    <property type="term" value="C:membrane"/>
    <property type="evidence" value="ECO:0000303"/>
    <property type="project" value="UniProtKB"/>
</dbReference>
<dbReference type="GO" id="GO:0043025">
    <property type="term" value="C:neuronal cell body"/>
    <property type="evidence" value="ECO:0000318"/>
    <property type="project" value="GO_Central"/>
</dbReference>
<dbReference type="GO" id="GO:0005886">
    <property type="term" value="C:plasma membrane"/>
    <property type="evidence" value="ECO:0000314"/>
    <property type="project" value="FlyBase"/>
</dbReference>
<dbReference type="GO" id="GO:0170023">
    <property type="term" value="F:ionotropic sweet taste receptor activity"/>
    <property type="evidence" value="ECO:0000315"/>
    <property type="project" value="FlyBase"/>
</dbReference>
<dbReference type="GO" id="GO:0099094">
    <property type="term" value="F:ligand-gated monoatomic cation channel activity"/>
    <property type="evidence" value="ECO:0000314"/>
    <property type="project" value="FlyBase"/>
</dbReference>
<dbReference type="GO" id="GO:0033041">
    <property type="term" value="F:sweet taste receptor activity"/>
    <property type="evidence" value="ECO:0000315"/>
    <property type="project" value="FlyBase"/>
</dbReference>
<dbReference type="GO" id="GO:0008527">
    <property type="term" value="F:taste receptor activity"/>
    <property type="evidence" value="ECO:0000303"/>
    <property type="project" value="UniProtKB"/>
</dbReference>
<dbReference type="GO" id="GO:0008343">
    <property type="term" value="P:adult feeding behavior"/>
    <property type="evidence" value="ECO:0000315"/>
    <property type="project" value="FlyBase"/>
</dbReference>
<dbReference type="GO" id="GO:0071332">
    <property type="term" value="P:cellular response to fructose stimulus"/>
    <property type="evidence" value="ECO:0000315"/>
    <property type="project" value="FlyBase"/>
</dbReference>
<dbReference type="GO" id="GO:0007635">
    <property type="term" value="P:chemosensory behavior"/>
    <property type="evidence" value="ECO:0000318"/>
    <property type="project" value="GO_Central"/>
</dbReference>
<dbReference type="GO" id="GO:0008049">
    <property type="term" value="P:male courtship behavior"/>
    <property type="evidence" value="ECO:0000318"/>
    <property type="project" value="GO_Central"/>
</dbReference>
<dbReference type="GO" id="GO:0098655">
    <property type="term" value="P:monoatomic cation transmembrane transport"/>
    <property type="evidence" value="ECO:0000314"/>
    <property type="project" value="FlyBase"/>
</dbReference>
<dbReference type="GO" id="GO:0032098">
    <property type="term" value="P:regulation of appetite"/>
    <property type="evidence" value="ECO:0000315"/>
    <property type="project" value="FlyBase"/>
</dbReference>
<dbReference type="GO" id="GO:0060259">
    <property type="term" value="P:regulation of feeding behavior"/>
    <property type="evidence" value="ECO:0000315"/>
    <property type="project" value="FlyBase"/>
</dbReference>
<dbReference type="GO" id="GO:0050916">
    <property type="term" value="P:sensory perception of sweet taste"/>
    <property type="evidence" value="ECO:0000315"/>
    <property type="project" value="FlyBase"/>
</dbReference>
<dbReference type="GO" id="GO:0050909">
    <property type="term" value="P:sensory perception of taste"/>
    <property type="evidence" value="ECO:0000303"/>
    <property type="project" value="UniProtKB"/>
</dbReference>
<dbReference type="GO" id="GO:0007165">
    <property type="term" value="P:signal transduction"/>
    <property type="evidence" value="ECO:0007669"/>
    <property type="project" value="UniProtKB-KW"/>
</dbReference>
<dbReference type="InterPro" id="IPR013604">
    <property type="entry name" value="7TM_chemorcpt"/>
</dbReference>
<dbReference type="PANTHER" id="PTHR21143:SF123">
    <property type="entry name" value="GUSTATORY RECEPTOR FOR SUGAR TASTE 43A-RELATED"/>
    <property type="match status" value="1"/>
</dbReference>
<dbReference type="PANTHER" id="PTHR21143">
    <property type="entry name" value="INVERTEBRATE GUSTATORY RECEPTOR"/>
    <property type="match status" value="1"/>
</dbReference>
<dbReference type="Pfam" id="PF08395">
    <property type="entry name" value="7tm_7"/>
    <property type="match status" value="1"/>
</dbReference>
<keyword id="KW-0002">3D-structure</keyword>
<keyword id="KW-1003">Cell membrane</keyword>
<keyword id="KW-0472">Membrane</keyword>
<keyword id="KW-0675">Receptor</keyword>
<keyword id="KW-1185">Reference proteome</keyword>
<keyword id="KW-0807">Transducer</keyword>
<keyword id="KW-0812">Transmembrane</keyword>
<keyword id="KW-1133">Transmembrane helix</keyword>
<gene>
    <name type="primary">Gr43a</name>
    <name type="synonym">GR43.1</name>
    <name type="ORF">CG1712</name>
</gene>